<accession>P17220</accession>
<keyword id="KW-0002">3D-structure</keyword>
<keyword id="KW-0007">Acetylation</keyword>
<keyword id="KW-0963">Cytoplasm</keyword>
<keyword id="KW-0903">Direct protein sequencing</keyword>
<keyword id="KW-0539">Nucleus</keyword>
<keyword id="KW-0597">Phosphoprotein</keyword>
<keyword id="KW-0647">Proteasome</keyword>
<keyword id="KW-1185">Reference proteome</keyword>
<reference key="1">
    <citation type="journal article" date="1990" name="Biochemistry">
        <title>Molecular cloning of cDNA for proteasomes from rat liver: primary structure of component C3 with a possible tyrosine phosphorylation site.</title>
        <authorList>
            <person name="Tanaka K."/>
            <person name="Fujiwara T."/>
            <person name="Kumatori A."/>
            <person name="Shin S."/>
            <person name="Yoshimura T."/>
            <person name="Ichihara A."/>
            <person name="Tokunaga F."/>
            <person name="Aruga R."/>
            <person name="Iwanaga S."/>
            <person name="Kakizuka A."/>
            <person name="Nakanishi S."/>
        </authorList>
    </citation>
    <scope>NUCLEOTIDE SEQUENCE [MRNA]</scope>
    <scope>PARTIAL PROTEIN SEQUENCE</scope>
    <scope>TISSUE SPECIFICITY</scope>
    <source>
        <strain>Wistar</strain>
        <tissue>Liver</tissue>
    </source>
</reference>
<reference key="2">
    <citation type="journal article" date="1990" name="FEBS Lett.">
        <title>The NH2-terminal residues of rat liver proteasome (multicatalytic proteinase complex) subunits, C2, C3 and C8, are N alpha-acetylated.</title>
        <authorList>
            <person name="Tokunaga F."/>
            <person name="Aruga R."/>
            <person name="Iwanaga S."/>
            <person name="Tanaka K."/>
            <person name="Ichihara A."/>
            <person name="Takao T."/>
            <person name="Shimonishi Y."/>
        </authorList>
    </citation>
    <scope>PROTEIN SEQUENCE OF 2-30</scope>
    <scope>CLEAVAGE OF INITIATOR METHIONINE</scope>
    <scope>ACETYLATION AT ALA-2</scope>
    <source>
        <tissue>Liver</tissue>
    </source>
</reference>
<reference key="3">
    <citation type="submission" date="2006-11" db="UniProtKB">
        <authorList>
            <person name="Lubec G."/>
            <person name="Afjehi-Sadat L."/>
        </authorList>
    </citation>
    <scope>PROTEIN SEQUENCE OF 5-39 AND 71-84</scope>
    <scope>IDENTIFICATION BY MASS SPECTROMETRY</scope>
    <source>
        <strain>Sprague-Dawley</strain>
        <tissue>Spinal cord</tissue>
    </source>
</reference>
<reference key="4">
    <citation type="journal article" date="1996" name="Biochemistry">
        <title>Nuclear multicatalytic proteinase subunit RRC3 is important for growth regulation in hepatocytes.</title>
        <authorList>
            <person name="Benedict C.M."/>
            <person name="Clawson G.A."/>
        </authorList>
    </citation>
    <scope>SUBCELLULAR LOCATION</scope>
    <scope>MUTAGENESIS OF TYR-121</scope>
    <scope>PHOSPHORYLATION AT TYR-121</scope>
</reference>
<protein>
    <recommendedName>
        <fullName>Proteasome subunit alpha type-2</fullName>
    </recommendedName>
    <alternativeName>
        <fullName>Macropain subunit C3</fullName>
    </alternativeName>
    <alternativeName>
        <fullName>Multicatalytic endopeptidase complex subunit C3</fullName>
    </alternativeName>
    <alternativeName>
        <fullName>Proteasome component C3</fullName>
    </alternativeName>
    <alternativeName>
        <fullName>Proteasome subunit alpha-2</fullName>
        <shortName>alpha-2</shortName>
    </alternativeName>
</protein>
<organism>
    <name type="scientific">Rattus norvegicus</name>
    <name type="common">Rat</name>
    <dbReference type="NCBI Taxonomy" id="10116"/>
    <lineage>
        <taxon>Eukaryota</taxon>
        <taxon>Metazoa</taxon>
        <taxon>Chordata</taxon>
        <taxon>Craniata</taxon>
        <taxon>Vertebrata</taxon>
        <taxon>Euteleostomi</taxon>
        <taxon>Mammalia</taxon>
        <taxon>Eutheria</taxon>
        <taxon>Euarchontoglires</taxon>
        <taxon>Glires</taxon>
        <taxon>Rodentia</taxon>
        <taxon>Myomorpha</taxon>
        <taxon>Muroidea</taxon>
        <taxon>Muridae</taxon>
        <taxon>Murinae</taxon>
        <taxon>Rattus</taxon>
    </lineage>
</organism>
<comment type="function">
    <text evidence="1">Component of the 20S core proteasome complex involved in the proteolytic degradation of most intracellular proteins. This complex plays numerous essential roles within the cell by associating with different regulatory particles. Associated with two 19S regulatory particles, forms the 26S proteasome and thus participates in the ATP-dependent degradation of ubiquitinated proteins. The 26S proteasome plays a key role in the maintenance of protein homeostasis by removing misfolded or damaged proteins that could impair cellular functions, and by removing proteins whose functions are no longer required. Associated with the PA200 or PA28, the 20S proteasome mediates ubiquitin-independent protein degradation. This type of proteolysis is required in several pathways including spermatogenesis (20S-PA200 complex) or generation of a subset of MHC class I-presented antigenic peptides (20S-PA28 complex).</text>
</comment>
<comment type="subunit">
    <text evidence="1">The 26S proteasome consists of a 20S proteasome core and two 19S regulatory subunits. The 20S proteasome core is a barrel-shaped complex made of 28 subunits that are arranged in four stacked rings. The two outer rings are each formed by seven alpha subunits, and the two inner rings are formed by seven beta subunits. The proteolytic activity is exerted by three beta-subunits PSMB5, PSMB6 and PSMB7.</text>
</comment>
<comment type="subcellular location">
    <subcellularLocation>
        <location evidence="6">Cytoplasm</location>
    </subcellularLocation>
    <subcellularLocation>
        <location evidence="6">Nucleus</location>
    </subcellularLocation>
    <text evidence="1 2">Translocated from the cytoplasm into the nucleus following interaction with AKIRIN2, which bridges the proteasome with the nuclear import receptor IPO9 (By similarity). Colocalizes with TRIM5 in cytoplasmic bodies (By similarity).</text>
</comment>
<comment type="tissue specificity">
    <text evidence="5">Ubiquitous.</text>
</comment>
<comment type="PTM">
    <text evidence="6">Phosphorylated on tyrosine residues; which may be important for nuclear import.</text>
</comment>
<comment type="similarity">
    <text evidence="3">Belongs to the peptidase T1A family.</text>
</comment>
<proteinExistence type="evidence at protein level"/>
<gene>
    <name type="primary">Psma2</name>
</gene>
<feature type="initiator methionine" description="Removed" evidence="4">
    <location>
        <position position="1"/>
    </location>
</feature>
<feature type="chain" id="PRO_0000124079" description="Proteasome subunit alpha type-2">
    <location>
        <begin position="2"/>
        <end position="234"/>
    </location>
</feature>
<feature type="modified residue" description="N-acetylalanine" evidence="4">
    <location>
        <position position="2"/>
    </location>
</feature>
<feature type="modified residue" description="Phosphotyrosine" evidence="2">
    <location>
        <position position="6"/>
    </location>
</feature>
<feature type="modified residue" description="Phosphoserine" evidence="1">
    <location>
        <position position="7"/>
    </location>
</feature>
<feature type="modified residue" description="Phosphoserine" evidence="1">
    <location>
        <position position="14"/>
    </location>
</feature>
<feature type="modified residue" description="Phosphoserine" evidence="1">
    <location>
        <position position="16"/>
    </location>
</feature>
<feature type="modified residue" description="Phosphotyrosine" evidence="1">
    <location>
        <position position="24"/>
    </location>
</feature>
<feature type="modified residue" description="N6-acetyllysine" evidence="1">
    <location>
        <position position="70"/>
    </location>
</feature>
<feature type="modified residue" description="Phosphotyrosine" evidence="1">
    <location>
        <position position="76"/>
    </location>
</feature>
<feature type="modified residue" description="Phosphotyrosine" evidence="7">
    <location>
        <position position="121"/>
    </location>
</feature>
<feature type="modified residue" description="N6-acetyllysine" evidence="1">
    <location>
        <position position="171"/>
    </location>
</feature>
<feature type="mutagenesis site" description="Abolishes nuclear localization and phosphorylation." evidence="6">
    <original>Y</original>
    <variation>F</variation>
    <location>
        <position position="121"/>
    </location>
</feature>
<feature type="helix" evidence="8">
    <location>
        <begin position="20"/>
        <end position="29"/>
    </location>
</feature>
<feature type="strand" evidence="8">
    <location>
        <begin position="35"/>
        <end position="40"/>
    </location>
</feature>
<feature type="strand" evidence="8">
    <location>
        <begin position="43"/>
        <end position="49"/>
    </location>
</feature>
<feature type="helix" evidence="8">
    <location>
        <begin position="59"/>
        <end position="61"/>
    </location>
</feature>
<feature type="strand" evidence="8">
    <location>
        <begin position="64"/>
        <end position="71"/>
    </location>
</feature>
<feature type="strand" evidence="8">
    <location>
        <begin position="73"/>
        <end position="78"/>
    </location>
</feature>
<feature type="helix" evidence="8">
    <location>
        <begin position="80"/>
        <end position="101"/>
    </location>
</feature>
<feature type="helix" evidence="8">
    <location>
        <begin position="107"/>
        <end position="120"/>
    </location>
</feature>
<feature type="turn" evidence="8">
    <location>
        <begin position="121"/>
        <end position="123"/>
    </location>
</feature>
<feature type="strand" evidence="8">
    <location>
        <begin position="124"/>
        <end position="126"/>
    </location>
</feature>
<feature type="strand" evidence="8">
    <location>
        <begin position="133"/>
        <end position="139"/>
    </location>
</feature>
<feature type="strand" evidence="8">
    <location>
        <begin position="144"/>
        <end position="149"/>
    </location>
</feature>
<feature type="strand" evidence="8">
    <location>
        <begin position="151"/>
        <end position="153"/>
    </location>
</feature>
<feature type="strand" evidence="8">
    <location>
        <begin position="155"/>
        <end position="164"/>
    </location>
</feature>
<feature type="helix" evidence="8">
    <location>
        <begin position="167"/>
        <end position="177"/>
    </location>
</feature>
<feature type="helix" evidence="8">
    <location>
        <begin position="184"/>
        <end position="197"/>
    </location>
</feature>
<feature type="turn" evidence="8">
    <location>
        <begin position="205"/>
        <end position="207"/>
    </location>
</feature>
<feature type="strand" evidence="8">
    <location>
        <begin position="208"/>
        <end position="214"/>
    </location>
</feature>
<feature type="strand" evidence="8">
    <location>
        <begin position="217"/>
        <end position="220"/>
    </location>
</feature>
<feature type="helix" evidence="8">
    <location>
        <begin position="223"/>
        <end position="231"/>
    </location>
</feature>
<name>PSA2_RAT</name>
<sequence>MAERGYSFSLTTFSPSGKLVQIEYALAAVAGGAPSVGIKAANGVVLATEKKQKSILYDERSVHKVEPITKHIGLVYSGMGPDYRVLVHRARKLAQQYYLVYQEPIPTAQLVQRVASVMQEYTQSGGVRPFGVSLLICGWNEGRPYLFQSDPSGAYFAWKATAMGKNYVNGKTFLEKRYNEDLELEDAIHTAILTLKESFEGQMTEDNIEVGICNEAGFRRLTPTEVRDYLAAIA</sequence>
<dbReference type="EMBL" id="J02897">
    <property type="protein sequence ID" value="AAA40838.1"/>
    <property type="molecule type" value="mRNA"/>
</dbReference>
<dbReference type="PIR" id="A34535">
    <property type="entry name" value="SNRTC3"/>
</dbReference>
<dbReference type="RefSeq" id="NP_058975.1">
    <property type="nucleotide sequence ID" value="NM_017279.2"/>
</dbReference>
<dbReference type="PDB" id="6EPC">
    <property type="method" value="EM"/>
    <property type="resolution" value="12.30 A"/>
    <property type="chains" value="B=1-234"/>
</dbReference>
<dbReference type="PDB" id="6EPD">
    <property type="method" value="EM"/>
    <property type="resolution" value="15.40 A"/>
    <property type="chains" value="B=1-234"/>
</dbReference>
<dbReference type="PDB" id="6EPE">
    <property type="method" value="EM"/>
    <property type="resolution" value="12.80 A"/>
    <property type="chains" value="B=1-234"/>
</dbReference>
<dbReference type="PDB" id="6EPF">
    <property type="method" value="EM"/>
    <property type="resolution" value="11.80 A"/>
    <property type="chains" value="B=1-234"/>
</dbReference>
<dbReference type="PDB" id="6TU3">
    <property type="method" value="EM"/>
    <property type="resolution" value="2.70 A"/>
    <property type="chains" value="B/P=1-234"/>
</dbReference>
<dbReference type="PDBsum" id="6EPC"/>
<dbReference type="PDBsum" id="6EPD"/>
<dbReference type="PDBsum" id="6EPE"/>
<dbReference type="PDBsum" id="6EPF"/>
<dbReference type="PDBsum" id="6TU3"/>
<dbReference type="EMDB" id="EMD-10586"/>
<dbReference type="EMDB" id="EMD-3913"/>
<dbReference type="EMDB" id="EMD-3914"/>
<dbReference type="EMDB" id="EMD-3915"/>
<dbReference type="EMDB" id="EMD-3916"/>
<dbReference type="SMR" id="P17220"/>
<dbReference type="BioGRID" id="248290">
    <property type="interactions" value="6"/>
</dbReference>
<dbReference type="ComplexPortal" id="CPX-8965">
    <property type="entry name" value="30S proteasome complex"/>
</dbReference>
<dbReference type="FunCoup" id="P17220">
    <property type="interactions" value="3220"/>
</dbReference>
<dbReference type="IntAct" id="P17220">
    <property type="interactions" value="2"/>
</dbReference>
<dbReference type="STRING" id="10116.ENSRNOP00000066950"/>
<dbReference type="MEROPS" id="T01.972"/>
<dbReference type="iPTMnet" id="P17220"/>
<dbReference type="PhosphoSitePlus" id="P17220"/>
<dbReference type="SwissPalm" id="P17220"/>
<dbReference type="jPOST" id="P17220"/>
<dbReference type="PaxDb" id="10116-ENSRNOP00000066950"/>
<dbReference type="Ensembl" id="ENSRNOT00000073834.3">
    <property type="protein sequence ID" value="ENSRNOP00000066950.1"/>
    <property type="gene ID" value="ENSRNOG00000049920.3"/>
</dbReference>
<dbReference type="GeneID" id="29669"/>
<dbReference type="KEGG" id="rno:29669"/>
<dbReference type="UCSC" id="RGD:61842">
    <property type="organism name" value="rat"/>
</dbReference>
<dbReference type="AGR" id="RGD:61842"/>
<dbReference type="CTD" id="5683"/>
<dbReference type="RGD" id="61842">
    <property type="gene designation" value="Psma2"/>
</dbReference>
<dbReference type="eggNOG" id="KOG0181">
    <property type="taxonomic scope" value="Eukaryota"/>
</dbReference>
<dbReference type="GeneTree" id="ENSGT00550000074870"/>
<dbReference type="HOGENOM" id="CLU_035750_4_1_1"/>
<dbReference type="InParanoid" id="P17220"/>
<dbReference type="OMA" id="ATCIGKD"/>
<dbReference type="OrthoDB" id="431557at2759"/>
<dbReference type="PhylomeDB" id="P17220"/>
<dbReference type="Reactome" id="R-RNO-1169091">
    <property type="pathway name" value="Activation of NF-kappaB in B cells"/>
</dbReference>
<dbReference type="Reactome" id="R-RNO-1234176">
    <property type="pathway name" value="Oxygen-dependent proline hydroxylation of Hypoxia-inducible Factor Alpha"/>
</dbReference>
<dbReference type="Reactome" id="R-RNO-1236978">
    <property type="pathway name" value="Cross-presentation of soluble exogenous antigens (endosomes)"/>
</dbReference>
<dbReference type="Reactome" id="R-RNO-174084">
    <property type="pathway name" value="Autodegradation of Cdh1 by Cdh1:APC/C"/>
</dbReference>
<dbReference type="Reactome" id="R-RNO-174113">
    <property type="pathway name" value="SCF-beta-TrCP mediated degradation of Emi1"/>
</dbReference>
<dbReference type="Reactome" id="R-RNO-174154">
    <property type="pathway name" value="APC/C:Cdc20 mediated degradation of Securin"/>
</dbReference>
<dbReference type="Reactome" id="R-RNO-174178">
    <property type="pathway name" value="APC/C:Cdh1 mediated degradation of Cdc20 and other APC/C:Cdh1 targeted proteins in late mitosis/early G1"/>
</dbReference>
<dbReference type="Reactome" id="R-RNO-174184">
    <property type="pathway name" value="Cdc20:Phospho-APC/C mediated degradation of Cyclin A"/>
</dbReference>
<dbReference type="Reactome" id="R-RNO-187577">
    <property type="pathway name" value="SCF(Skp2)-mediated degradation of p27/p21"/>
</dbReference>
<dbReference type="Reactome" id="R-RNO-195253">
    <property type="pathway name" value="Degradation of beta-catenin by the destruction complex"/>
</dbReference>
<dbReference type="Reactome" id="R-RNO-2467813">
    <property type="pathway name" value="Separation of Sister Chromatids"/>
</dbReference>
<dbReference type="Reactome" id="R-RNO-349425">
    <property type="pathway name" value="Autodegradation of the E3 ubiquitin ligase COP1"/>
</dbReference>
<dbReference type="Reactome" id="R-RNO-350562">
    <property type="pathway name" value="Regulation of ornithine decarboxylase (ODC)"/>
</dbReference>
<dbReference type="Reactome" id="R-RNO-382556">
    <property type="pathway name" value="ABC-family proteins mediated transport"/>
</dbReference>
<dbReference type="Reactome" id="R-RNO-450408">
    <property type="pathway name" value="AUF1 (hnRNP D0) binds and destabilizes mRNA"/>
</dbReference>
<dbReference type="Reactome" id="R-RNO-4608870">
    <property type="pathway name" value="Asymmetric localization of PCP proteins"/>
</dbReference>
<dbReference type="Reactome" id="R-RNO-4641257">
    <property type="pathway name" value="Degradation of AXIN"/>
</dbReference>
<dbReference type="Reactome" id="R-RNO-4641258">
    <property type="pathway name" value="Degradation of DVL"/>
</dbReference>
<dbReference type="Reactome" id="R-RNO-5358346">
    <property type="pathway name" value="Hedgehog ligand biogenesis"/>
</dbReference>
<dbReference type="Reactome" id="R-RNO-5607761">
    <property type="pathway name" value="Dectin-1 mediated noncanonical NF-kB signaling"/>
</dbReference>
<dbReference type="Reactome" id="R-RNO-5610780">
    <property type="pathway name" value="Degradation of GLI1 by the proteasome"/>
</dbReference>
<dbReference type="Reactome" id="R-RNO-5610785">
    <property type="pathway name" value="GLI3 is processed to GLI3R by the proteasome"/>
</dbReference>
<dbReference type="Reactome" id="R-RNO-5632684">
    <property type="pathway name" value="Hedgehog 'on' state"/>
</dbReference>
<dbReference type="Reactome" id="R-RNO-5658442">
    <property type="pathway name" value="Regulation of RAS by GAPs"/>
</dbReference>
<dbReference type="Reactome" id="R-RNO-5668541">
    <property type="pathway name" value="TNFR2 non-canonical NF-kB pathway"/>
</dbReference>
<dbReference type="Reactome" id="R-RNO-5676590">
    <property type="pathway name" value="NIK--&gt;noncanonical NF-kB signaling"/>
</dbReference>
<dbReference type="Reactome" id="R-RNO-5687128">
    <property type="pathway name" value="MAPK6/MAPK4 signaling"/>
</dbReference>
<dbReference type="Reactome" id="R-RNO-5689603">
    <property type="pathway name" value="UCH proteinases"/>
</dbReference>
<dbReference type="Reactome" id="R-RNO-5689880">
    <property type="pathway name" value="Ub-specific processing proteases"/>
</dbReference>
<dbReference type="Reactome" id="R-RNO-6798695">
    <property type="pathway name" value="Neutrophil degranulation"/>
</dbReference>
<dbReference type="Reactome" id="R-RNO-68867">
    <property type="pathway name" value="Assembly of the pre-replicative complex"/>
</dbReference>
<dbReference type="Reactome" id="R-RNO-68949">
    <property type="pathway name" value="Orc1 removal from chromatin"/>
</dbReference>
<dbReference type="Reactome" id="R-RNO-69017">
    <property type="pathway name" value="CDK-mediated phosphorylation and removal of Cdc6"/>
</dbReference>
<dbReference type="Reactome" id="R-RNO-69481">
    <property type="pathway name" value="G2/M Checkpoints"/>
</dbReference>
<dbReference type="Reactome" id="R-RNO-69601">
    <property type="pathway name" value="Ubiquitin Mediated Degradation of Phosphorylated Cdc25A"/>
</dbReference>
<dbReference type="Reactome" id="R-RNO-75815">
    <property type="pathway name" value="Ubiquitin-dependent degradation of Cyclin D"/>
</dbReference>
<dbReference type="Reactome" id="R-RNO-8852276">
    <property type="pathway name" value="The role of GTSE1 in G2/M progression after G2 checkpoint"/>
</dbReference>
<dbReference type="Reactome" id="R-RNO-8854050">
    <property type="pathway name" value="FBXL7 down-regulates AURKA during mitotic entry and in early mitosis"/>
</dbReference>
<dbReference type="Reactome" id="R-RNO-8939236">
    <property type="pathway name" value="RUNX1 regulates transcription of genes involved in differentiation of HSCs"/>
</dbReference>
<dbReference type="Reactome" id="R-RNO-8941858">
    <property type="pathway name" value="Regulation of RUNX3 expression and activity"/>
</dbReference>
<dbReference type="Reactome" id="R-RNO-8948751">
    <property type="pathway name" value="Regulation of PTEN stability and activity"/>
</dbReference>
<dbReference type="Reactome" id="R-RNO-8951664">
    <property type="pathway name" value="Neddylation"/>
</dbReference>
<dbReference type="Reactome" id="R-RNO-9755511">
    <property type="pathway name" value="KEAP1-NFE2L2 pathway"/>
</dbReference>
<dbReference type="Reactome" id="R-RNO-9762114">
    <property type="pathway name" value="GSK3B and BTRC:CUL1-mediated-degradation of NFE2L2"/>
</dbReference>
<dbReference type="Reactome" id="R-RNO-983168">
    <property type="pathway name" value="Antigen processing: Ubiquitination &amp; Proteasome degradation"/>
</dbReference>
<dbReference type="Reactome" id="R-RNO-9907900">
    <property type="pathway name" value="Proteasome assembly"/>
</dbReference>
<dbReference type="PRO" id="PR:P17220"/>
<dbReference type="Proteomes" id="UP000002494">
    <property type="component" value="Chromosome 17"/>
</dbReference>
<dbReference type="Bgee" id="ENSRNOG00000049920">
    <property type="expression patterns" value="Expressed in thymus and 20 other cell types or tissues"/>
</dbReference>
<dbReference type="GO" id="GO:0005737">
    <property type="term" value="C:cytoplasm"/>
    <property type="evidence" value="ECO:0000266"/>
    <property type="project" value="RGD"/>
</dbReference>
<dbReference type="GO" id="GO:0005634">
    <property type="term" value="C:nucleus"/>
    <property type="evidence" value="ECO:0000266"/>
    <property type="project" value="RGD"/>
</dbReference>
<dbReference type="GO" id="GO:0000932">
    <property type="term" value="C:P-body"/>
    <property type="evidence" value="ECO:0000250"/>
    <property type="project" value="UniProtKB"/>
</dbReference>
<dbReference type="GO" id="GO:0000502">
    <property type="term" value="C:proteasome complex"/>
    <property type="evidence" value="ECO:0000266"/>
    <property type="project" value="RGD"/>
</dbReference>
<dbReference type="GO" id="GO:0005839">
    <property type="term" value="C:proteasome core complex"/>
    <property type="evidence" value="ECO:0000250"/>
    <property type="project" value="UniProtKB"/>
</dbReference>
<dbReference type="GO" id="GO:0019773">
    <property type="term" value="C:proteasome core complex, alpha-subunit complex"/>
    <property type="evidence" value="ECO:0000250"/>
    <property type="project" value="UniProtKB"/>
</dbReference>
<dbReference type="GO" id="GO:0043161">
    <property type="term" value="P:proteasome-mediated ubiquitin-dependent protein catabolic process"/>
    <property type="evidence" value="ECO:0000318"/>
    <property type="project" value="GO_Central"/>
</dbReference>
<dbReference type="GO" id="GO:0009615">
    <property type="term" value="P:response to virus"/>
    <property type="evidence" value="ECO:0000266"/>
    <property type="project" value="RGD"/>
</dbReference>
<dbReference type="CDD" id="cd03750">
    <property type="entry name" value="proteasome_alpha_type_2"/>
    <property type="match status" value="1"/>
</dbReference>
<dbReference type="FunFam" id="3.60.20.10:FF:000012">
    <property type="entry name" value="Proteasome subunit alpha type"/>
    <property type="match status" value="1"/>
</dbReference>
<dbReference type="Gene3D" id="3.60.20.10">
    <property type="entry name" value="Glutamine Phosphoribosylpyrophosphate, subunit 1, domain 1"/>
    <property type="match status" value="1"/>
</dbReference>
<dbReference type="InterPro" id="IPR029055">
    <property type="entry name" value="Ntn_hydrolases_N"/>
</dbReference>
<dbReference type="InterPro" id="IPR050115">
    <property type="entry name" value="Proteasome_alpha"/>
</dbReference>
<dbReference type="InterPro" id="IPR023332">
    <property type="entry name" value="Proteasome_alpha-type"/>
</dbReference>
<dbReference type="InterPro" id="IPR000426">
    <property type="entry name" value="Proteasome_asu_N"/>
</dbReference>
<dbReference type="InterPro" id="IPR001353">
    <property type="entry name" value="Proteasome_sua/b"/>
</dbReference>
<dbReference type="NCBIfam" id="NF003075">
    <property type="entry name" value="PRK03996.1"/>
    <property type="match status" value="1"/>
</dbReference>
<dbReference type="PANTHER" id="PTHR11599">
    <property type="entry name" value="PROTEASOME SUBUNIT ALPHA/BETA"/>
    <property type="match status" value="1"/>
</dbReference>
<dbReference type="Pfam" id="PF00227">
    <property type="entry name" value="Proteasome"/>
    <property type="match status" value="1"/>
</dbReference>
<dbReference type="Pfam" id="PF10584">
    <property type="entry name" value="Proteasome_A_N"/>
    <property type="match status" value="1"/>
</dbReference>
<dbReference type="SMART" id="SM00948">
    <property type="entry name" value="Proteasome_A_N"/>
    <property type="match status" value="1"/>
</dbReference>
<dbReference type="SUPFAM" id="SSF56235">
    <property type="entry name" value="N-terminal nucleophile aminohydrolases (Ntn hydrolases)"/>
    <property type="match status" value="1"/>
</dbReference>
<dbReference type="PROSITE" id="PS00388">
    <property type="entry name" value="PROTEASOME_ALPHA_1"/>
    <property type="match status" value="1"/>
</dbReference>
<dbReference type="PROSITE" id="PS51475">
    <property type="entry name" value="PROTEASOME_ALPHA_2"/>
    <property type="match status" value="1"/>
</dbReference>
<evidence type="ECO:0000250" key="1">
    <source>
        <dbReference type="UniProtKB" id="P25787"/>
    </source>
</evidence>
<evidence type="ECO:0000250" key="2">
    <source>
        <dbReference type="UniProtKB" id="P49722"/>
    </source>
</evidence>
<evidence type="ECO:0000255" key="3">
    <source>
        <dbReference type="PROSITE-ProRule" id="PRU00808"/>
    </source>
</evidence>
<evidence type="ECO:0000269" key="4">
    <source>
    </source>
</evidence>
<evidence type="ECO:0000269" key="5">
    <source>
    </source>
</evidence>
<evidence type="ECO:0000269" key="6">
    <source>
    </source>
</evidence>
<evidence type="ECO:0000305" key="7">
    <source>
    </source>
</evidence>
<evidence type="ECO:0007829" key="8">
    <source>
        <dbReference type="PDB" id="6TU3"/>
    </source>
</evidence>